<feature type="chain" id="PRO_0000308796" description="60S ribosomal subunit assembly/export protein LOC1">
    <location>
        <begin position="1"/>
        <end position="204"/>
    </location>
</feature>
<feature type="region of interest" description="Disordered" evidence="3">
    <location>
        <begin position="1"/>
        <end position="24"/>
    </location>
</feature>
<feature type="region of interest" description="Disordered" evidence="3">
    <location>
        <begin position="142"/>
        <end position="204"/>
    </location>
</feature>
<feature type="coiled-coil region" evidence="2">
    <location>
        <begin position="118"/>
        <end position="169"/>
    </location>
</feature>
<feature type="compositionally biased region" description="Basic and acidic residues" evidence="3">
    <location>
        <begin position="142"/>
        <end position="167"/>
    </location>
</feature>
<gene>
    <name type="primary">LOC1</name>
    <name type="ORF">LELG_02918</name>
</gene>
<accession>A5DZY1</accession>
<evidence type="ECO:0000250" key="1"/>
<evidence type="ECO:0000255" key="2"/>
<evidence type="ECO:0000256" key="3">
    <source>
        <dbReference type="SAM" id="MobiDB-lite"/>
    </source>
</evidence>
<evidence type="ECO:0000305" key="4"/>
<reference key="1">
    <citation type="journal article" date="2009" name="Nature">
        <title>Evolution of pathogenicity and sexual reproduction in eight Candida genomes.</title>
        <authorList>
            <person name="Butler G."/>
            <person name="Rasmussen M.D."/>
            <person name="Lin M.F."/>
            <person name="Santos M.A.S."/>
            <person name="Sakthikumar S."/>
            <person name="Munro C.A."/>
            <person name="Rheinbay E."/>
            <person name="Grabherr M."/>
            <person name="Forche A."/>
            <person name="Reedy J.L."/>
            <person name="Agrafioti I."/>
            <person name="Arnaud M.B."/>
            <person name="Bates S."/>
            <person name="Brown A.J.P."/>
            <person name="Brunke S."/>
            <person name="Costanzo M.C."/>
            <person name="Fitzpatrick D.A."/>
            <person name="de Groot P.W.J."/>
            <person name="Harris D."/>
            <person name="Hoyer L.L."/>
            <person name="Hube B."/>
            <person name="Klis F.M."/>
            <person name="Kodira C."/>
            <person name="Lennard N."/>
            <person name="Logue M.E."/>
            <person name="Martin R."/>
            <person name="Neiman A.M."/>
            <person name="Nikolaou E."/>
            <person name="Quail M.A."/>
            <person name="Quinn J."/>
            <person name="Santos M.C."/>
            <person name="Schmitzberger F.F."/>
            <person name="Sherlock G."/>
            <person name="Shah P."/>
            <person name="Silverstein K.A.T."/>
            <person name="Skrzypek M.S."/>
            <person name="Soll D."/>
            <person name="Staggs R."/>
            <person name="Stansfield I."/>
            <person name="Stumpf M.P.H."/>
            <person name="Sudbery P.E."/>
            <person name="Srikantha T."/>
            <person name="Zeng Q."/>
            <person name="Berman J."/>
            <person name="Berriman M."/>
            <person name="Heitman J."/>
            <person name="Gow N.A.R."/>
            <person name="Lorenz M.C."/>
            <person name="Birren B.W."/>
            <person name="Kellis M."/>
            <person name="Cuomo C.A."/>
        </authorList>
    </citation>
    <scope>NUCLEOTIDE SEQUENCE [LARGE SCALE GENOMIC DNA]</scope>
    <source>
        <strain>ATCC 11503 / BCRC 21390 / CBS 2605 / JCM 1781 / NBRC 1676 / NRRL YB-4239</strain>
    </source>
</reference>
<sequence>MAPRQSQTAKRNKTQNKTRENESEVFLDSAARNLLENQPKLAAKSKVKKLSKLQVKKQQAKIRLYGAKNGKEYREEQLSIPDLNKAIVPGVKAKRGKKGKKFVDDNDSLTLNRLVKSINDKYDQVNESKLEKSRRLEEIRELKRQEMERKEQMKKDKLDGKKDELRSKASVARAARRKNAKARKADEVDEGENTVPKKKKVSFA</sequence>
<dbReference type="EMBL" id="CH981526">
    <property type="protein sequence ID" value="EDK44739.1"/>
    <property type="molecule type" value="Genomic_DNA"/>
</dbReference>
<dbReference type="RefSeq" id="XP_001526360.1">
    <property type="nucleotide sequence ID" value="XM_001526310.1"/>
</dbReference>
<dbReference type="SMR" id="A5DZY1"/>
<dbReference type="FunCoup" id="A5DZY1">
    <property type="interactions" value="356"/>
</dbReference>
<dbReference type="STRING" id="379508.A5DZY1"/>
<dbReference type="GeneID" id="5232935"/>
<dbReference type="KEGG" id="lel:PVL30_003751"/>
<dbReference type="VEuPathDB" id="FungiDB:LELG_02918"/>
<dbReference type="eggNOG" id="ENOG502RY6R">
    <property type="taxonomic scope" value="Eukaryota"/>
</dbReference>
<dbReference type="HOGENOM" id="CLU_096593_1_0_1"/>
<dbReference type="InParanoid" id="A5DZY1"/>
<dbReference type="OMA" id="RESMNTI"/>
<dbReference type="OrthoDB" id="1743802at2759"/>
<dbReference type="Proteomes" id="UP000001996">
    <property type="component" value="Unassembled WGS sequence"/>
</dbReference>
<dbReference type="GO" id="GO:0005730">
    <property type="term" value="C:nucleolus"/>
    <property type="evidence" value="ECO:0007669"/>
    <property type="project" value="UniProtKB-SubCell"/>
</dbReference>
<dbReference type="GO" id="GO:0030687">
    <property type="term" value="C:preribosome, large subunit precursor"/>
    <property type="evidence" value="ECO:0007669"/>
    <property type="project" value="TreeGrafter"/>
</dbReference>
<dbReference type="GO" id="GO:0003729">
    <property type="term" value="F:mRNA binding"/>
    <property type="evidence" value="ECO:0007669"/>
    <property type="project" value="InterPro"/>
</dbReference>
<dbReference type="GO" id="GO:0008298">
    <property type="term" value="P:intracellular mRNA localization"/>
    <property type="evidence" value="ECO:0007669"/>
    <property type="project" value="TreeGrafter"/>
</dbReference>
<dbReference type="GO" id="GO:0051028">
    <property type="term" value="P:mRNA transport"/>
    <property type="evidence" value="ECO:0007669"/>
    <property type="project" value="UniProtKB-KW"/>
</dbReference>
<dbReference type="GO" id="GO:0042273">
    <property type="term" value="P:ribosomal large subunit biogenesis"/>
    <property type="evidence" value="ECO:0007669"/>
    <property type="project" value="InterPro"/>
</dbReference>
<dbReference type="InterPro" id="IPR037650">
    <property type="entry name" value="Loc1"/>
</dbReference>
<dbReference type="PANTHER" id="PTHR28028">
    <property type="entry name" value="60S RIBOSOMAL SUBUNIT ASSEMBLY/EXPORT PROTEIN LOC1"/>
    <property type="match status" value="1"/>
</dbReference>
<dbReference type="PANTHER" id="PTHR28028:SF1">
    <property type="entry name" value="60S RIBOSOMAL SUBUNIT ASSEMBLY_EXPORT PROTEIN LOC1"/>
    <property type="match status" value="1"/>
</dbReference>
<proteinExistence type="inferred from homology"/>
<name>LOC1_LODEL</name>
<protein>
    <recommendedName>
        <fullName>60S ribosomal subunit assembly/export protein LOC1</fullName>
    </recommendedName>
</protein>
<comment type="function">
    <text evidence="1">Required for efficient assembly and nuclear export of the 60S ribosomal subunit.</text>
</comment>
<comment type="subunit">
    <text evidence="1">Component of the 66S pre-ribosomal particle.</text>
</comment>
<comment type="subcellular location">
    <subcellularLocation>
        <location evidence="1">Nucleus</location>
        <location evidence="1">Nucleolus</location>
    </subcellularLocation>
</comment>
<comment type="similarity">
    <text evidence="4">Belongs to the LOC1 family.</text>
</comment>
<organism>
    <name type="scientific">Lodderomyces elongisporus (strain ATCC 11503 / CBS 2605 / JCM 1781 / NBRC 1676 / NRRL YB-4239)</name>
    <name type="common">Yeast</name>
    <name type="synonym">Saccharomyces elongisporus</name>
    <dbReference type="NCBI Taxonomy" id="379508"/>
    <lineage>
        <taxon>Eukaryota</taxon>
        <taxon>Fungi</taxon>
        <taxon>Dikarya</taxon>
        <taxon>Ascomycota</taxon>
        <taxon>Saccharomycotina</taxon>
        <taxon>Pichiomycetes</taxon>
        <taxon>Debaryomycetaceae</taxon>
        <taxon>Candida/Lodderomyces clade</taxon>
        <taxon>Lodderomyces</taxon>
    </lineage>
</organism>
<keyword id="KW-0175">Coiled coil</keyword>
<keyword id="KW-0509">mRNA transport</keyword>
<keyword id="KW-0539">Nucleus</keyword>
<keyword id="KW-1185">Reference proteome</keyword>
<keyword id="KW-0690">Ribosome biogenesis</keyword>
<keyword id="KW-0813">Transport</keyword>